<organism>
    <name type="scientific">Streptococcus pyogenes serotype M3 (strain SSI-1)</name>
    <dbReference type="NCBI Taxonomy" id="193567"/>
    <lineage>
        <taxon>Bacteria</taxon>
        <taxon>Bacillati</taxon>
        <taxon>Bacillota</taxon>
        <taxon>Bacilli</taxon>
        <taxon>Lactobacillales</taxon>
        <taxon>Streptococcaceae</taxon>
        <taxon>Streptococcus</taxon>
    </lineage>
</organism>
<dbReference type="EMBL" id="BA000034">
    <property type="protein sequence ID" value="BAC63146.1"/>
    <property type="molecule type" value="Genomic_DNA"/>
</dbReference>
<dbReference type="RefSeq" id="WP_000440811.1">
    <property type="nucleotide sequence ID" value="NC_004606.1"/>
</dbReference>
<dbReference type="SMR" id="P0DE79"/>
<dbReference type="GeneID" id="69900035"/>
<dbReference type="KEGG" id="sps:SPs0051"/>
<dbReference type="HOGENOM" id="CLU_073626_1_0_9"/>
<dbReference type="GO" id="GO:0022627">
    <property type="term" value="C:cytosolic small ribosomal subunit"/>
    <property type="evidence" value="ECO:0007669"/>
    <property type="project" value="TreeGrafter"/>
</dbReference>
<dbReference type="GO" id="GO:0019843">
    <property type="term" value="F:rRNA binding"/>
    <property type="evidence" value="ECO:0007669"/>
    <property type="project" value="UniProtKB-UniRule"/>
</dbReference>
<dbReference type="GO" id="GO:0003735">
    <property type="term" value="F:structural constituent of ribosome"/>
    <property type="evidence" value="ECO:0007669"/>
    <property type="project" value="InterPro"/>
</dbReference>
<dbReference type="GO" id="GO:0006412">
    <property type="term" value="P:translation"/>
    <property type="evidence" value="ECO:0007669"/>
    <property type="project" value="UniProtKB-UniRule"/>
</dbReference>
<dbReference type="CDD" id="cd00364">
    <property type="entry name" value="Ribosomal_uS17"/>
    <property type="match status" value="1"/>
</dbReference>
<dbReference type="FunFam" id="2.40.50.140:FF:000026">
    <property type="entry name" value="30S ribosomal protein S17"/>
    <property type="match status" value="1"/>
</dbReference>
<dbReference type="Gene3D" id="2.40.50.140">
    <property type="entry name" value="Nucleic acid-binding proteins"/>
    <property type="match status" value="1"/>
</dbReference>
<dbReference type="HAMAP" id="MF_01345_B">
    <property type="entry name" value="Ribosomal_uS17_B"/>
    <property type="match status" value="1"/>
</dbReference>
<dbReference type="InterPro" id="IPR012340">
    <property type="entry name" value="NA-bd_OB-fold"/>
</dbReference>
<dbReference type="InterPro" id="IPR000266">
    <property type="entry name" value="Ribosomal_uS17"/>
</dbReference>
<dbReference type="InterPro" id="IPR019984">
    <property type="entry name" value="Ribosomal_uS17_bact/chlr"/>
</dbReference>
<dbReference type="InterPro" id="IPR019979">
    <property type="entry name" value="Ribosomal_uS17_CS"/>
</dbReference>
<dbReference type="NCBIfam" id="NF004123">
    <property type="entry name" value="PRK05610.1"/>
    <property type="match status" value="1"/>
</dbReference>
<dbReference type="NCBIfam" id="TIGR03635">
    <property type="entry name" value="uS17_bact"/>
    <property type="match status" value="1"/>
</dbReference>
<dbReference type="PANTHER" id="PTHR10744">
    <property type="entry name" value="40S RIBOSOMAL PROTEIN S11 FAMILY MEMBER"/>
    <property type="match status" value="1"/>
</dbReference>
<dbReference type="PANTHER" id="PTHR10744:SF1">
    <property type="entry name" value="SMALL RIBOSOMAL SUBUNIT PROTEIN US17M"/>
    <property type="match status" value="1"/>
</dbReference>
<dbReference type="Pfam" id="PF00366">
    <property type="entry name" value="Ribosomal_S17"/>
    <property type="match status" value="1"/>
</dbReference>
<dbReference type="PRINTS" id="PR00973">
    <property type="entry name" value="RIBOSOMALS17"/>
</dbReference>
<dbReference type="SUPFAM" id="SSF50249">
    <property type="entry name" value="Nucleic acid-binding proteins"/>
    <property type="match status" value="1"/>
</dbReference>
<dbReference type="PROSITE" id="PS00056">
    <property type="entry name" value="RIBOSOMAL_S17"/>
    <property type="match status" value="1"/>
</dbReference>
<reference key="1">
    <citation type="journal article" date="2003" name="Genome Res.">
        <title>Genome sequence of an M3 strain of Streptococcus pyogenes reveals a large-scale genomic rearrangement in invasive strains and new insights into phage evolution.</title>
        <authorList>
            <person name="Nakagawa I."/>
            <person name="Kurokawa K."/>
            <person name="Yamashita A."/>
            <person name="Nakata M."/>
            <person name="Tomiyasu Y."/>
            <person name="Okahashi N."/>
            <person name="Kawabata S."/>
            <person name="Yamazaki K."/>
            <person name="Shiba T."/>
            <person name="Yasunaga T."/>
            <person name="Hayashi H."/>
            <person name="Hattori M."/>
            <person name="Hamada S."/>
        </authorList>
    </citation>
    <scope>NUCLEOTIDE SEQUENCE [LARGE SCALE GENOMIC DNA]</scope>
    <source>
        <strain>SSI-1</strain>
    </source>
</reference>
<proteinExistence type="inferred from homology"/>
<protein>
    <recommendedName>
        <fullName evidence="1">Small ribosomal subunit protein uS17</fullName>
    </recommendedName>
    <alternativeName>
        <fullName evidence="2">30S ribosomal protein S17</fullName>
    </alternativeName>
</protein>
<sequence length="86" mass="10090">MERNQRKTLYGRVVSDKMDKTITVVVETKRNHPVYGKRINYSKKYKAHDENNVAKEGDIVRIMETRPLSATKRFRLVEVVEKAVII</sequence>
<feature type="chain" id="PRO_0000411529" description="Small ribosomal subunit protein uS17">
    <location>
        <begin position="1"/>
        <end position="86"/>
    </location>
</feature>
<comment type="function">
    <text evidence="1">One of the primary rRNA binding proteins, it binds specifically to the 5'-end of 16S ribosomal RNA.</text>
</comment>
<comment type="subunit">
    <text evidence="1">Part of the 30S ribosomal subunit.</text>
</comment>
<comment type="similarity">
    <text evidence="1">Belongs to the universal ribosomal protein uS17 family.</text>
</comment>
<evidence type="ECO:0000255" key="1">
    <source>
        <dbReference type="HAMAP-Rule" id="MF_01345"/>
    </source>
</evidence>
<evidence type="ECO:0000305" key="2"/>
<name>RS17_STRPQ</name>
<keyword id="KW-0687">Ribonucleoprotein</keyword>
<keyword id="KW-0689">Ribosomal protein</keyword>
<keyword id="KW-0694">RNA-binding</keyword>
<keyword id="KW-0699">rRNA-binding</keyword>
<gene>
    <name evidence="1" type="primary">rpsQ</name>
    <name type="ordered locus">SPs0051</name>
</gene>
<accession>P0DE79</accession>
<accession>Q79YR6</accession>
<accession>Q7CFL1</accession>